<keyword id="KW-0963">Cytoplasm</keyword>
<keyword id="KW-0489">Methyltransferase</keyword>
<keyword id="KW-1185">Reference proteome</keyword>
<keyword id="KW-0949">S-adenosyl-L-methionine</keyword>
<keyword id="KW-0808">Transferase</keyword>
<sequence length="312" mass="33728">MKWSEISIHTTEEAVEAVSHILHEAGASGVAIEDPAELTKEREQQYGEIYALNPDEYPAEGVLIKAYFPQTDSLHETIAGVKSSIDVLPSYDIEIGTGNITVNEVNEEDWATAWKKYYHPVQISDTFTIVPTWEEYTPSSPDEKIIELDPGMAFGTGTHPTTTMCIRALEKTVQPGDNIIDVGTGSGVLSIAAAKLGASSVQAYDLDPVAVESAEMNVRLNKTDDIVSVGQNSLLEGIEGPVDLIVANLLAEIILLFPEDAARVVKSGGLFITSGIIAAKEKVISEALEKAGFTIEEVLRMEDWVAIIARNA</sequence>
<evidence type="ECO:0000255" key="1">
    <source>
        <dbReference type="HAMAP-Rule" id="MF_00735"/>
    </source>
</evidence>
<reference key="1">
    <citation type="journal article" date="2003" name="Nature">
        <title>Genome sequence of Bacillus cereus and comparative analysis with Bacillus anthracis.</title>
        <authorList>
            <person name="Ivanova N."/>
            <person name="Sorokin A."/>
            <person name="Anderson I."/>
            <person name="Galleron N."/>
            <person name="Candelon B."/>
            <person name="Kapatral V."/>
            <person name="Bhattacharyya A."/>
            <person name="Reznik G."/>
            <person name="Mikhailova N."/>
            <person name="Lapidus A."/>
            <person name="Chu L."/>
            <person name="Mazur M."/>
            <person name="Goltsman E."/>
            <person name="Larsen N."/>
            <person name="D'Souza M."/>
            <person name="Walunas T."/>
            <person name="Grechkin Y."/>
            <person name="Pusch G."/>
            <person name="Haselkorn R."/>
            <person name="Fonstein M."/>
            <person name="Ehrlich S.D."/>
            <person name="Overbeek R."/>
            <person name="Kyrpides N.C."/>
        </authorList>
    </citation>
    <scope>NUCLEOTIDE SEQUENCE [LARGE SCALE GENOMIC DNA]</scope>
    <source>
        <strain>ATCC 14579 / DSM 31 / CCUG 7414 / JCM 2152 / NBRC 15305 / NCIMB 9373 / NCTC 2599 / NRRL B-3711</strain>
    </source>
</reference>
<gene>
    <name evidence="1" type="primary">prmA</name>
    <name type="ordered locus">BC_4310</name>
</gene>
<protein>
    <recommendedName>
        <fullName evidence="1">Ribosomal protein L11 methyltransferase</fullName>
        <shortName evidence="1">L11 Mtase</shortName>
        <ecNumber evidence="1">2.1.1.-</ecNumber>
    </recommendedName>
</protein>
<feature type="chain" id="PRO_0000192233" description="Ribosomal protein L11 methyltransferase">
    <location>
        <begin position="1"/>
        <end position="312"/>
    </location>
</feature>
<feature type="binding site" evidence="1">
    <location>
        <position position="162"/>
    </location>
    <ligand>
        <name>S-adenosyl-L-methionine</name>
        <dbReference type="ChEBI" id="CHEBI:59789"/>
    </ligand>
</feature>
<feature type="binding site" evidence="1">
    <location>
        <position position="183"/>
    </location>
    <ligand>
        <name>S-adenosyl-L-methionine</name>
        <dbReference type="ChEBI" id="CHEBI:59789"/>
    </ligand>
</feature>
<feature type="binding site" evidence="1">
    <location>
        <position position="205"/>
    </location>
    <ligand>
        <name>S-adenosyl-L-methionine</name>
        <dbReference type="ChEBI" id="CHEBI:59789"/>
    </ligand>
</feature>
<feature type="binding site" evidence="1">
    <location>
        <position position="248"/>
    </location>
    <ligand>
        <name>S-adenosyl-L-methionine</name>
        <dbReference type="ChEBI" id="CHEBI:59789"/>
    </ligand>
</feature>
<comment type="function">
    <text evidence="1">Methylates ribosomal protein L11.</text>
</comment>
<comment type="catalytic activity">
    <reaction evidence="1">
        <text>L-lysyl-[protein] + 3 S-adenosyl-L-methionine = N(6),N(6),N(6)-trimethyl-L-lysyl-[protein] + 3 S-adenosyl-L-homocysteine + 3 H(+)</text>
        <dbReference type="Rhea" id="RHEA:54192"/>
        <dbReference type="Rhea" id="RHEA-COMP:9752"/>
        <dbReference type="Rhea" id="RHEA-COMP:13826"/>
        <dbReference type="ChEBI" id="CHEBI:15378"/>
        <dbReference type="ChEBI" id="CHEBI:29969"/>
        <dbReference type="ChEBI" id="CHEBI:57856"/>
        <dbReference type="ChEBI" id="CHEBI:59789"/>
        <dbReference type="ChEBI" id="CHEBI:61961"/>
    </reaction>
</comment>
<comment type="subcellular location">
    <subcellularLocation>
        <location evidence="1">Cytoplasm</location>
    </subcellularLocation>
</comment>
<comment type="similarity">
    <text evidence="1">Belongs to the methyltransferase superfamily. PrmA family.</text>
</comment>
<organism>
    <name type="scientific">Bacillus cereus (strain ATCC 14579 / DSM 31 / CCUG 7414 / JCM 2152 / NBRC 15305 / NCIMB 9373 / NCTC 2599 / NRRL B-3711)</name>
    <dbReference type="NCBI Taxonomy" id="226900"/>
    <lineage>
        <taxon>Bacteria</taxon>
        <taxon>Bacillati</taxon>
        <taxon>Bacillota</taxon>
        <taxon>Bacilli</taxon>
        <taxon>Bacillales</taxon>
        <taxon>Bacillaceae</taxon>
        <taxon>Bacillus</taxon>
        <taxon>Bacillus cereus group</taxon>
    </lineage>
</organism>
<dbReference type="EC" id="2.1.1.-" evidence="1"/>
<dbReference type="EMBL" id="AE016877">
    <property type="protein sequence ID" value="AAP11223.1"/>
    <property type="molecule type" value="Genomic_DNA"/>
</dbReference>
<dbReference type="RefSeq" id="NP_834022.1">
    <property type="nucleotide sequence ID" value="NC_004722.1"/>
</dbReference>
<dbReference type="RefSeq" id="WP_000872101.1">
    <property type="nucleotide sequence ID" value="NZ_CP138336.1"/>
</dbReference>
<dbReference type="SMR" id="Q818F1"/>
<dbReference type="STRING" id="226900.BC_4310"/>
<dbReference type="KEGG" id="bce:BC4310"/>
<dbReference type="PATRIC" id="fig|226900.8.peg.4457"/>
<dbReference type="HOGENOM" id="CLU_049382_0_1_9"/>
<dbReference type="OrthoDB" id="9785995at2"/>
<dbReference type="Proteomes" id="UP000001417">
    <property type="component" value="Chromosome"/>
</dbReference>
<dbReference type="GO" id="GO:0005737">
    <property type="term" value="C:cytoplasm"/>
    <property type="evidence" value="ECO:0007669"/>
    <property type="project" value="UniProtKB-SubCell"/>
</dbReference>
<dbReference type="GO" id="GO:0008276">
    <property type="term" value="F:protein methyltransferase activity"/>
    <property type="evidence" value="ECO:0000318"/>
    <property type="project" value="GO_Central"/>
</dbReference>
<dbReference type="GO" id="GO:0016279">
    <property type="term" value="F:protein-lysine N-methyltransferase activity"/>
    <property type="evidence" value="ECO:0007669"/>
    <property type="project" value="RHEA"/>
</dbReference>
<dbReference type="GO" id="GO:0032259">
    <property type="term" value="P:methylation"/>
    <property type="evidence" value="ECO:0007669"/>
    <property type="project" value="UniProtKB-KW"/>
</dbReference>
<dbReference type="CDD" id="cd02440">
    <property type="entry name" value="AdoMet_MTases"/>
    <property type="match status" value="1"/>
</dbReference>
<dbReference type="Gene3D" id="3.40.50.150">
    <property type="entry name" value="Vaccinia Virus protein VP39"/>
    <property type="match status" value="1"/>
</dbReference>
<dbReference type="HAMAP" id="MF_00735">
    <property type="entry name" value="Methyltr_PrmA"/>
    <property type="match status" value="1"/>
</dbReference>
<dbReference type="InterPro" id="IPR050078">
    <property type="entry name" value="Ribosomal_L11_MeTrfase_PrmA"/>
</dbReference>
<dbReference type="InterPro" id="IPR004498">
    <property type="entry name" value="Ribosomal_PrmA_MeTrfase"/>
</dbReference>
<dbReference type="InterPro" id="IPR029063">
    <property type="entry name" value="SAM-dependent_MTases_sf"/>
</dbReference>
<dbReference type="NCBIfam" id="TIGR00406">
    <property type="entry name" value="prmA"/>
    <property type="match status" value="1"/>
</dbReference>
<dbReference type="PANTHER" id="PTHR43648">
    <property type="entry name" value="ELECTRON TRANSFER FLAVOPROTEIN BETA SUBUNIT LYSINE METHYLTRANSFERASE"/>
    <property type="match status" value="1"/>
</dbReference>
<dbReference type="PANTHER" id="PTHR43648:SF1">
    <property type="entry name" value="ELECTRON TRANSFER FLAVOPROTEIN BETA SUBUNIT LYSINE METHYLTRANSFERASE"/>
    <property type="match status" value="1"/>
</dbReference>
<dbReference type="Pfam" id="PF06325">
    <property type="entry name" value="PrmA"/>
    <property type="match status" value="1"/>
</dbReference>
<dbReference type="PIRSF" id="PIRSF000401">
    <property type="entry name" value="RPL11_MTase"/>
    <property type="match status" value="1"/>
</dbReference>
<dbReference type="SUPFAM" id="SSF53335">
    <property type="entry name" value="S-adenosyl-L-methionine-dependent methyltransferases"/>
    <property type="match status" value="1"/>
</dbReference>
<proteinExistence type="inferred from homology"/>
<accession>Q818F1</accession>
<name>PRMA_BACCR</name>